<comment type="function">
    <text evidence="1">Converts the preformed base xanthine, a product of nucleic acid breakdown, to xanthosine 5'-monophosphate (XMP), so it can be reused for RNA or DNA synthesis.</text>
</comment>
<comment type="catalytic activity">
    <reaction evidence="1">
        <text>XMP + diphosphate = xanthine + 5-phospho-alpha-D-ribose 1-diphosphate</text>
        <dbReference type="Rhea" id="RHEA:10800"/>
        <dbReference type="ChEBI" id="CHEBI:17712"/>
        <dbReference type="ChEBI" id="CHEBI:33019"/>
        <dbReference type="ChEBI" id="CHEBI:57464"/>
        <dbReference type="ChEBI" id="CHEBI:58017"/>
        <dbReference type="EC" id="2.4.2.22"/>
    </reaction>
</comment>
<comment type="pathway">
    <text evidence="1">Purine metabolism; XMP biosynthesis via salvage pathway; XMP from xanthine: step 1/1.</text>
</comment>
<comment type="subunit">
    <text evidence="1">Homodimer.</text>
</comment>
<comment type="subcellular location">
    <subcellularLocation>
        <location evidence="1">Cytoplasm</location>
    </subcellularLocation>
</comment>
<comment type="similarity">
    <text evidence="1">Belongs to the purine/pyrimidine phosphoribosyltransferase family. Xpt subfamily.</text>
</comment>
<accession>Q7A1T6</accession>
<organism>
    <name type="scientific">Staphylococcus aureus (strain MW2)</name>
    <dbReference type="NCBI Taxonomy" id="196620"/>
    <lineage>
        <taxon>Bacteria</taxon>
        <taxon>Bacillati</taxon>
        <taxon>Bacillota</taxon>
        <taxon>Bacilli</taxon>
        <taxon>Bacillales</taxon>
        <taxon>Staphylococcaceae</taxon>
        <taxon>Staphylococcus</taxon>
    </lineage>
</organism>
<reference key="1">
    <citation type="journal article" date="2002" name="Lancet">
        <title>Genome and virulence determinants of high virulence community-acquired MRSA.</title>
        <authorList>
            <person name="Baba T."/>
            <person name="Takeuchi F."/>
            <person name="Kuroda M."/>
            <person name="Yuzawa H."/>
            <person name="Aoki K."/>
            <person name="Oguchi A."/>
            <person name="Nagai Y."/>
            <person name="Iwama N."/>
            <person name="Asano K."/>
            <person name="Naimi T."/>
            <person name="Kuroda H."/>
            <person name="Cui L."/>
            <person name="Yamamoto K."/>
            <person name="Hiramatsu K."/>
        </authorList>
    </citation>
    <scope>NUCLEOTIDE SEQUENCE [LARGE SCALE GENOMIC DNA]</scope>
    <source>
        <strain>MW2</strain>
    </source>
</reference>
<gene>
    <name evidence="1" type="primary">xpt</name>
    <name type="ordered locus">MW0364</name>
</gene>
<keyword id="KW-0963">Cytoplasm</keyword>
<keyword id="KW-0328">Glycosyltransferase</keyword>
<keyword id="KW-0660">Purine salvage</keyword>
<keyword id="KW-0808">Transferase</keyword>
<sequence>MELLGQKVKEDGVVIDEKILKVDGFLNHQIDAKLMNEVGRTFYEQFKDKGITKILTIEASGIAPAIMAALHFDVPCLFAKKAKPSTLTDGYYETSIHSFTKNKTSTVIVSKEFLSEEDTVLIIDDFLANGDASLGLYDIAQQANAKTAGIGIVVEKSFQNGHQRLEEAGLTVSSLCKVASLEGNKVTLVGEE</sequence>
<dbReference type="EC" id="2.4.2.22" evidence="1"/>
<dbReference type="EMBL" id="BA000033">
    <property type="protein sequence ID" value="BAB94229.1"/>
    <property type="molecule type" value="Genomic_DNA"/>
</dbReference>
<dbReference type="RefSeq" id="WP_000421410.1">
    <property type="nucleotide sequence ID" value="NC_003923.1"/>
</dbReference>
<dbReference type="SMR" id="Q7A1T6"/>
<dbReference type="GeneID" id="66838694"/>
<dbReference type="KEGG" id="sam:MW0364"/>
<dbReference type="HOGENOM" id="CLU_099015_0_0_9"/>
<dbReference type="UniPathway" id="UPA00602">
    <property type="reaction ID" value="UER00658"/>
</dbReference>
<dbReference type="GO" id="GO:0005737">
    <property type="term" value="C:cytoplasm"/>
    <property type="evidence" value="ECO:0007669"/>
    <property type="project" value="UniProtKB-SubCell"/>
</dbReference>
<dbReference type="GO" id="GO:0000310">
    <property type="term" value="F:xanthine phosphoribosyltransferase activity"/>
    <property type="evidence" value="ECO:0007669"/>
    <property type="project" value="UniProtKB-UniRule"/>
</dbReference>
<dbReference type="GO" id="GO:0006166">
    <property type="term" value="P:purine ribonucleoside salvage"/>
    <property type="evidence" value="ECO:0007669"/>
    <property type="project" value="UniProtKB-KW"/>
</dbReference>
<dbReference type="GO" id="GO:0046110">
    <property type="term" value="P:xanthine metabolic process"/>
    <property type="evidence" value="ECO:0007669"/>
    <property type="project" value="InterPro"/>
</dbReference>
<dbReference type="GO" id="GO:0032265">
    <property type="term" value="P:XMP salvage"/>
    <property type="evidence" value="ECO:0007669"/>
    <property type="project" value="UniProtKB-UniRule"/>
</dbReference>
<dbReference type="CDD" id="cd06223">
    <property type="entry name" value="PRTases_typeI"/>
    <property type="match status" value="1"/>
</dbReference>
<dbReference type="Gene3D" id="3.40.50.2020">
    <property type="match status" value="1"/>
</dbReference>
<dbReference type="HAMAP" id="MF_01184">
    <property type="entry name" value="XPRTase"/>
    <property type="match status" value="1"/>
</dbReference>
<dbReference type="InterPro" id="IPR000836">
    <property type="entry name" value="PRibTrfase_dom"/>
</dbReference>
<dbReference type="InterPro" id="IPR029057">
    <property type="entry name" value="PRTase-like"/>
</dbReference>
<dbReference type="InterPro" id="IPR050118">
    <property type="entry name" value="Pur/Pyrimidine_PRTase"/>
</dbReference>
<dbReference type="InterPro" id="IPR010079">
    <property type="entry name" value="Xanthine_PRibTrfase"/>
</dbReference>
<dbReference type="NCBIfam" id="NF006671">
    <property type="entry name" value="PRK09219.1"/>
    <property type="match status" value="1"/>
</dbReference>
<dbReference type="NCBIfam" id="TIGR01744">
    <property type="entry name" value="XPRTase"/>
    <property type="match status" value="1"/>
</dbReference>
<dbReference type="PANTHER" id="PTHR43864">
    <property type="entry name" value="HYPOXANTHINE/GUANINE PHOSPHORIBOSYLTRANSFERASE"/>
    <property type="match status" value="1"/>
</dbReference>
<dbReference type="PANTHER" id="PTHR43864:SF1">
    <property type="entry name" value="XANTHINE PHOSPHORIBOSYLTRANSFERASE"/>
    <property type="match status" value="1"/>
</dbReference>
<dbReference type="SUPFAM" id="SSF53271">
    <property type="entry name" value="PRTase-like"/>
    <property type="match status" value="1"/>
</dbReference>
<evidence type="ECO:0000255" key="1">
    <source>
        <dbReference type="HAMAP-Rule" id="MF_01184"/>
    </source>
</evidence>
<name>XPT_STAAW</name>
<proteinExistence type="inferred from homology"/>
<feature type="chain" id="PRO_0000339749" description="Xanthine phosphoribosyltransferase">
    <location>
        <begin position="1"/>
        <end position="192"/>
    </location>
</feature>
<feature type="binding site" evidence="1">
    <location>
        <position position="20"/>
    </location>
    <ligand>
        <name>xanthine</name>
        <dbReference type="ChEBI" id="CHEBI:17712"/>
    </ligand>
</feature>
<feature type="binding site" evidence="1">
    <location>
        <position position="27"/>
    </location>
    <ligand>
        <name>xanthine</name>
        <dbReference type="ChEBI" id="CHEBI:17712"/>
    </ligand>
</feature>
<feature type="binding site" evidence="1">
    <location>
        <begin position="128"/>
        <end position="132"/>
    </location>
    <ligand>
        <name>5-phospho-alpha-D-ribose 1-diphosphate</name>
        <dbReference type="ChEBI" id="CHEBI:58017"/>
    </ligand>
</feature>
<feature type="binding site" evidence="1">
    <location>
        <position position="156"/>
    </location>
    <ligand>
        <name>xanthine</name>
        <dbReference type="ChEBI" id="CHEBI:17712"/>
    </ligand>
</feature>
<protein>
    <recommendedName>
        <fullName evidence="1">Xanthine phosphoribosyltransferase</fullName>
        <shortName evidence="1">XPRTase</shortName>
        <ecNumber evidence="1">2.4.2.22</ecNumber>
    </recommendedName>
</protein>